<feature type="chain" id="PRO_0000132171" description="Small ribosomal subunit protein uS13">
    <location>
        <begin position="1"/>
        <end position="118"/>
    </location>
</feature>
<feature type="region of interest" description="Disordered" evidence="2">
    <location>
        <begin position="94"/>
        <end position="118"/>
    </location>
</feature>
<proteinExistence type="inferred from homology"/>
<protein>
    <recommendedName>
        <fullName evidence="1">Small ribosomal subunit protein uS13</fullName>
    </recommendedName>
    <alternativeName>
        <fullName evidence="3">30S ribosomal protein S13</fullName>
    </alternativeName>
</protein>
<dbReference type="EMBL" id="AE008923">
    <property type="protein sequence ID" value="AAM35876.1"/>
    <property type="molecule type" value="Genomic_DNA"/>
</dbReference>
<dbReference type="RefSeq" id="WP_003486672.1">
    <property type="nucleotide sequence ID" value="NC_003919.1"/>
</dbReference>
<dbReference type="SMR" id="Q8NKX3"/>
<dbReference type="GeneID" id="97509357"/>
<dbReference type="KEGG" id="xac:XAC0993"/>
<dbReference type="eggNOG" id="COG0099">
    <property type="taxonomic scope" value="Bacteria"/>
</dbReference>
<dbReference type="HOGENOM" id="CLU_103849_1_2_6"/>
<dbReference type="Proteomes" id="UP000000576">
    <property type="component" value="Chromosome"/>
</dbReference>
<dbReference type="GO" id="GO:0005829">
    <property type="term" value="C:cytosol"/>
    <property type="evidence" value="ECO:0007669"/>
    <property type="project" value="TreeGrafter"/>
</dbReference>
<dbReference type="GO" id="GO:0015935">
    <property type="term" value="C:small ribosomal subunit"/>
    <property type="evidence" value="ECO:0007669"/>
    <property type="project" value="TreeGrafter"/>
</dbReference>
<dbReference type="GO" id="GO:0019843">
    <property type="term" value="F:rRNA binding"/>
    <property type="evidence" value="ECO:0007669"/>
    <property type="project" value="UniProtKB-UniRule"/>
</dbReference>
<dbReference type="GO" id="GO:0003735">
    <property type="term" value="F:structural constituent of ribosome"/>
    <property type="evidence" value="ECO:0007669"/>
    <property type="project" value="InterPro"/>
</dbReference>
<dbReference type="GO" id="GO:0000049">
    <property type="term" value="F:tRNA binding"/>
    <property type="evidence" value="ECO:0007669"/>
    <property type="project" value="UniProtKB-UniRule"/>
</dbReference>
<dbReference type="GO" id="GO:0006412">
    <property type="term" value="P:translation"/>
    <property type="evidence" value="ECO:0007669"/>
    <property type="project" value="UniProtKB-UniRule"/>
</dbReference>
<dbReference type="FunFam" id="1.10.8.50:FF:000001">
    <property type="entry name" value="30S ribosomal protein S13"/>
    <property type="match status" value="1"/>
</dbReference>
<dbReference type="FunFam" id="4.10.910.10:FF:000001">
    <property type="entry name" value="30S ribosomal protein S13"/>
    <property type="match status" value="1"/>
</dbReference>
<dbReference type="Gene3D" id="1.10.8.50">
    <property type="match status" value="1"/>
</dbReference>
<dbReference type="Gene3D" id="4.10.910.10">
    <property type="entry name" value="30s ribosomal protein s13, domain 2"/>
    <property type="match status" value="1"/>
</dbReference>
<dbReference type="HAMAP" id="MF_01315">
    <property type="entry name" value="Ribosomal_uS13"/>
    <property type="match status" value="1"/>
</dbReference>
<dbReference type="InterPro" id="IPR027437">
    <property type="entry name" value="Rbsml_uS13_C"/>
</dbReference>
<dbReference type="InterPro" id="IPR001892">
    <property type="entry name" value="Ribosomal_uS13"/>
</dbReference>
<dbReference type="InterPro" id="IPR010979">
    <property type="entry name" value="Ribosomal_uS13-like_H2TH"/>
</dbReference>
<dbReference type="InterPro" id="IPR019980">
    <property type="entry name" value="Ribosomal_uS13_bac-type"/>
</dbReference>
<dbReference type="InterPro" id="IPR018269">
    <property type="entry name" value="Ribosomal_uS13_CS"/>
</dbReference>
<dbReference type="NCBIfam" id="TIGR03631">
    <property type="entry name" value="uS13_bact"/>
    <property type="match status" value="1"/>
</dbReference>
<dbReference type="PANTHER" id="PTHR10871">
    <property type="entry name" value="30S RIBOSOMAL PROTEIN S13/40S RIBOSOMAL PROTEIN S18"/>
    <property type="match status" value="1"/>
</dbReference>
<dbReference type="PANTHER" id="PTHR10871:SF1">
    <property type="entry name" value="SMALL RIBOSOMAL SUBUNIT PROTEIN US13M"/>
    <property type="match status" value="1"/>
</dbReference>
<dbReference type="Pfam" id="PF00416">
    <property type="entry name" value="Ribosomal_S13"/>
    <property type="match status" value="1"/>
</dbReference>
<dbReference type="PIRSF" id="PIRSF002134">
    <property type="entry name" value="Ribosomal_S13"/>
    <property type="match status" value="1"/>
</dbReference>
<dbReference type="SUPFAM" id="SSF46946">
    <property type="entry name" value="S13-like H2TH domain"/>
    <property type="match status" value="1"/>
</dbReference>
<dbReference type="PROSITE" id="PS00646">
    <property type="entry name" value="RIBOSOMAL_S13_1"/>
    <property type="match status" value="1"/>
</dbReference>
<dbReference type="PROSITE" id="PS50159">
    <property type="entry name" value="RIBOSOMAL_S13_2"/>
    <property type="match status" value="1"/>
</dbReference>
<gene>
    <name evidence="1" type="primary">rpsM</name>
    <name type="ordered locus">XAC0993</name>
</gene>
<sequence length="118" mass="13375">MARIAGVNLPAQKHVWVGLQSIYGIGRTRSKKLCESAGVTSTTKIRDLSEPEIERLRAEVGKYVVEGDLRREIGIAIKRLMDLGCYRGLRHRRGLPLRGQRTRTNARTRKGPRKAIRK</sequence>
<keyword id="KW-0687">Ribonucleoprotein</keyword>
<keyword id="KW-0689">Ribosomal protein</keyword>
<keyword id="KW-0694">RNA-binding</keyword>
<keyword id="KW-0699">rRNA-binding</keyword>
<keyword id="KW-0820">tRNA-binding</keyword>
<accession>Q8NKX3</accession>
<reference key="1">
    <citation type="journal article" date="2002" name="Nature">
        <title>Comparison of the genomes of two Xanthomonas pathogens with differing host specificities.</title>
        <authorList>
            <person name="da Silva A.C.R."/>
            <person name="Ferro J.A."/>
            <person name="Reinach F.C."/>
            <person name="Farah C.S."/>
            <person name="Furlan L.R."/>
            <person name="Quaggio R.B."/>
            <person name="Monteiro-Vitorello C.B."/>
            <person name="Van Sluys M.A."/>
            <person name="Almeida N.F. Jr."/>
            <person name="Alves L.M.C."/>
            <person name="do Amaral A.M."/>
            <person name="Bertolini M.C."/>
            <person name="Camargo L.E.A."/>
            <person name="Camarotte G."/>
            <person name="Cannavan F."/>
            <person name="Cardozo J."/>
            <person name="Chambergo F."/>
            <person name="Ciapina L.P."/>
            <person name="Cicarelli R.M.B."/>
            <person name="Coutinho L.L."/>
            <person name="Cursino-Santos J.R."/>
            <person name="El-Dorry H."/>
            <person name="Faria J.B."/>
            <person name="Ferreira A.J.S."/>
            <person name="Ferreira R.C.C."/>
            <person name="Ferro M.I.T."/>
            <person name="Formighieri E.F."/>
            <person name="Franco M.C."/>
            <person name="Greggio C.C."/>
            <person name="Gruber A."/>
            <person name="Katsuyama A.M."/>
            <person name="Kishi L.T."/>
            <person name="Leite R.P."/>
            <person name="Lemos E.G.M."/>
            <person name="Lemos M.V.F."/>
            <person name="Locali E.C."/>
            <person name="Machado M.A."/>
            <person name="Madeira A.M.B.N."/>
            <person name="Martinez-Rossi N.M."/>
            <person name="Martins E.C."/>
            <person name="Meidanis J."/>
            <person name="Menck C.F.M."/>
            <person name="Miyaki C.Y."/>
            <person name="Moon D.H."/>
            <person name="Moreira L.M."/>
            <person name="Novo M.T.M."/>
            <person name="Okura V.K."/>
            <person name="Oliveira M.C."/>
            <person name="Oliveira V.R."/>
            <person name="Pereira H.A."/>
            <person name="Rossi A."/>
            <person name="Sena J.A.D."/>
            <person name="Silva C."/>
            <person name="de Souza R.F."/>
            <person name="Spinola L.A.F."/>
            <person name="Takita M.A."/>
            <person name="Tamura R.E."/>
            <person name="Teixeira E.C."/>
            <person name="Tezza R.I.D."/>
            <person name="Trindade dos Santos M."/>
            <person name="Truffi D."/>
            <person name="Tsai S.M."/>
            <person name="White F.F."/>
            <person name="Setubal J.C."/>
            <person name="Kitajima J.P."/>
        </authorList>
    </citation>
    <scope>NUCLEOTIDE SEQUENCE [LARGE SCALE GENOMIC DNA]</scope>
    <source>
        <strain>306</strain>
    </source>
</reference>
<evidence type="ECO:0000255" key="1">
    <source>
        <dbReference type="HAMAP-Rule" id="MF_01315"/>
    </source>
</evidence>
<evidence type="ECO:0000256" key="2">
    <source>
        <dbReference type="SAM" id="MobiDB-lite"/>
    </source>
</evidence>
<evidence type="ECO:0000305" key="3"/>
<comment type="function">
    <text evidence="1">Located at the top of the head of the 30S subunit, it contacts several helices of the 16S rRNA. In the 70S ribosome it contacts the 23S rRNA (bridge B1a) and protein L5 of the 50S subunit (bridge B1b), connecting the 2 subunits; these bridges are implicated in subunit movement. Contacts the tRNAs in the A and P-sites.</text>
</comment>
<comment type="subunit">
    <text evidence="1">Part of the 30S ribosomal subunit. Forms a loose heterodimer with protein S19. Forms two bridges to the 50S subunit in the 70S ribosome.</text>
</comment>
<comment type="similarity">
    <text evidence="1">Belongs to the universal ribosomal protein uS13 family.</text>
</comment>
<organism>
    <name type="scientific">Xanthomonas axonopodis pv. citri (strain 306)</name>
    <dbReference type="NCBI Taxonomy" id="190486"/>
    <lineage>
        <taxon>Bacteria</taxon>
        <taxon>Pseudomonadati</taxon>
        <taxon>Pseudomonadota</taxon>
        <taxon>Gammaproteobacteria</taxon>
        <taxon>Lysobacterales</taxon>
        <taxon>Lysobacteraceae</taxon>
        <taxon>Xanthomonas</taxon>
    </lineage>
</organism>
<name>RS13_XANAC</name>